<protein>
    <recommendedName>
        <fullName evidence="15">L-aspartate oxidase</fullName>
        <shortName evidence="13">LASPO</shortName>
        <ecNumber evidence="2 4 5 7 8 10 11 12">1.4.3.16</ecNumber>
    </recommendedName>
    <alternativeName>
        <fullName evidence="16">L-aspartate:fumarate oxidoreductase</fullName>
        <ecNumber evidence="2 4 5 12">1.5.99.-</ecNumber>
    </alternativeName>
    <alternativeName>
        <fullName evidence="14">Quinolinate synthetase B</fullName>
    </alternativeName>
</protein>
<accession>P10902</accession>
<accession>P78099</accession>
<accession>Q2MAF6</accession>
<sequence length="540" mass="60337">MNTLPEHSCDVLIIGSGAAGLSLALRLADQHQVIVLSKGPVTEGSTFYAQGGIAAVFDETDSIDSHVEDTLIAGAGICDRHAVEFVASNARSCVQWLIDQGVLFDTHIQPNGEESYHLTREGGHSHRRILHAADATGREVETTLVSKALNHPNIRVLERSNAVDLIVSDKIGLPGTRRVVGAWVWNRNKETVETCHAKAVVLATGGASKVYQYTTNPDISSGDGIAMAWRAGCRVANLEFNQFHPTALYHPQARNFLLTEALRGEGAYLKRPDGTRFMPDFDERGELAPRDIVARAIDHEMKRLGADCMFLDISHKPADFIRQHFPMIYEKLLGLGIDLTQEPVPIVPAAHYTCGGVMVDDHGRTDVEGLYAIGEVSYTGLHGANRMASNSLLECLVYGWSAAEDITRRMPYAHDISTLPPWDESRVENPDERVVIQHNWHELRLFMWDYVGIVRTTKRLERALRRITMLQQEIDEYYAHFRVSNNLLELRNLVQVAELIVRCAMMRKESRGLHFTLDYPELLTHSGPSILSPGNHYINR</sequence>
<feature type="chain" id="PRO_0000184384" description="L-aspartate oxidase">
    <location>
        <begin position="1"/>
        <end position="540"/>
    </location>
</feature>
<feature type="active site" description="Proton donor/acceptor" evidence="18 19 22">
    <location>
        <position position="290"/>
    </location>
</feature>
<feature type="binding site" evidence="3 22 23">
    <location>
        <begin position="16"/>
        <end position="19"/>
    </location>
    <ligand>
        <name>FAD</name>
        <dbReference type="ChEBI" id="CHEBI:57692"/>
    </ligand>
</feature>
<feature type="binding site" evidence="3 22 23">
    <location>
        <position position="38"/>
    </location>
    <ligand>
        <name>FAD</name>
        <dbReference type="ChEBI" id="CHEBI:57692"/>
    </ligand>
</feature>
<feature type="binding site" evidence="3 22 23">
    <location>
        <begin position="45"/>
        <end position="52"/>
    </location>
    <ligand>
        <name>FAD</name>
        <dbReference type="ChEBI" id="CHEBI:57692"/>
    </ligand>
</feature>
<feature type="binding site" evidence="3 22 23">
    <location>
        <begin position="161"/>
        <end position="162"/>
    </location>
    <ligand>
        <name>FAD</name>
        <dbReference type="ChEBI" id="CHEBI:57692"/>
    </ligand>
</feature>
<feature type="binding site" evidence="3 22 23">
    <location>
        <position position="223"/>
    </location>
    <ligand>
        <name>FAD</name>
        <dbReference type="ChEBI" id="CHEBI:57692"/>
    </ligand>
</feature>
<feature type="binding site" evidence="3 22">
    <location>
        <position position="244"/>
    </location>
    <ligand>
        <name>succinate</name>
        <dbReference type="ChEBI" id="CHEBI:30031"/>
    </ligand>
</feature>
<feature type="binding site" evidence="3 22">
    <location>
        <begin position="259"/>
        <end position="260"/>
    </location>
    <ligand>
        <name>succinate</name>
        <dbReference type="ChEBI" id="CHEBI:30031"/>
    </ligand>
</feature>
<feature type="binding site" evidence="3 22 23">
    <location>
        <position position="375"/>
    </location>
    <ligand>
        <name>FAD</name>
        <dbReference type="ChEBI" id="CHEBI:57692"/>
    </ligand>
</feature>
<feature type="binding site" evidence="3 22">
    <location>
        <position position="389"/>
    </location>
    <ligand>
        <name>succinate</name>
        <dbReference type="ChEBI" id="CHEBI:30031"/>
    </ligand>
</feature>
<feature type="binding site" evidence="3 22 23">
    <location>
        <begin position="391"/>
        <end position="392"/>
    </location>
    <ligand>
        <name>FAD</name>
        <dbReference type="ChEBI" id="CHEBI:57692"/>
    </ligand>
</feature>
<feature type="site" description="Important in orienting the L-aspartate substrate" evidence="18">
    <location>
        <position position="121"/>
    </location>
</feature>
<feature type="mutagenesis site" description="Loss of activity. Has largely lost both FAD and ligand-binding properties." evidence="11">
    <original>EGSTFY</original>
    <variation>RSHTVA</variation>
    <location>
        <begin position="43"/>
        <end position="48"/>
    </location>
</feature>
<feature type="mutagenesis site" description="Loss of activity. Has largely lost both FAD and ligand-binding properties." evidence="11">
    <original>EGS</original>
    <variation>RSH</variation>
    <location>
        <begin position="43"/>
        <end position="45"/>
    </location>
</feature>
<feature type="mutagenesis site" description="2-fold increase in Kd for FAD. Retains 15% of specific activity." evidence="11">
    <original>E</original>
    <variation>R</variation>
    <location>
        <position position="43"/>
    </location>
</feature>
<feature type="mutagenesis site" description="Loss of activity. Has largely lost both FAD and ligand-binding properties." evidence="11">
    <original>S</original>
    <variation>H</variation>
    <location>
        <position position="45"/>
    </location>
</feature>
<feature type="mutagenesis site" description="Retains reduced benzyl viologen:fumarate oxidoreductase activity, with almost the same catalytic efficiency. Lacks L-aspartate:oxygen and L-aspartate:fumarate oxidoreductase activities." evidence="6">
    <original>E</original>
    <variation>A</variation>
    <location>
        <position position="121"/>
    </location>
</feature>
<feature type="mutagenesis site" description="Retains reduced benzyl viologen:fumarate oxidoreductase activity, with 690-fold decrease in catalytic efficiency. Lacks L-aspartate:oxygen and L-aspartate:fumarate oxidoreductase activities." evidence="6">
    <original>E</original>
    <variation>D</variation>
    <location>
        <position position="121"/>
    </location>
</feature>
<feature type="mutagenesis site" description="Retains reduced benzyl viologen:fumarate oxidoreductase activity, with 72-fold decrease in catalytic efficiency. Lacks L-aspartate:oxygen and L-aspartate:fumarate oxidoreductase activities." evidence="6">
    <original>E</original>
    <variation>K</variation>
    <location>
        <position position="121"/>
    </location>
</feature>
<feature type="mutagenesis site" description="Retains reduced benzyl viologen:fumarate oxidoreductase activity, with 17-fold decrease in catalytic efficiency. Lacks L-aspartate:oxygen and L-aspartate:fumarate oxidoreductase activities." evidence="6">
    <original>E</original>
    <variation>Q</variation>
    <location>
        <position position="121"/>
    </location>
</feature>
<feature type="mutagenesis site" description="18-fold decrease in catalytic efficiency with both oxygen and fumarate as electron acceptors. Decreases FAD binding." evidence="2">
    <original>H</original>
    <variation>A</variation>
    <location>
        <position position="244"/>
    </location>
</feature>
<feature type="mutagenesis site" description="122-fold decrease in catalytic efficiency with oxygen as electron acceptor. 110-fold decrease in catalytic efficiency with fumarate as electron acceptor. Decreases FAD binding." evidence="2">
    <original>H</original>
    <variation>S</variation>
    <location>
        <position position="244"/>
    </location>
</feature>
<feature type="mutagenesis site" description="Loss of activity with both oxygen and fumarate as electron acceptors. Decreases FAD binding." evidence="2">
    <original>R</original>
    <variation>L</variation>
    <location>
        <position position="290"/>
    </location>
</feature>
<feature type="mutagenesis site" description="1170-fold decrease in catalytic efficiency with oxygen as electron acceptor. 83-fold decrease in catalytic efficiency with fumarate as electron acceptor. Decreases FAD binding." evidence="2">
    <original>H</original>
    <variation>A</variation>
    <location>
        <position position="351"/>
    </location>
</feature>
<feature type="mutagenesis site" description="Shows weak activity with oxygen as electron acceptor. 148-fold decrease in catalytic efficiency with fumarate as electron acceptor. Decreases FAD binding." evidence="2">
    <original>H</original>
    <variation>S</variation>
    <location>
        <position position="351"/>
    </location>
</feature>
<feature type="mutagenesis site" description="Shows weak activity with oxygen as electron acceptor. 78-fold decrease in catalytic efficiency with fumarate as electron acceptor. Decreases FAD binding." evidence="2">
    <original>R</original>
    <variation>L</variation>
    <location>
        <position position="386"/>
    </location>
</feature>
<feature type="sequence conflict" description="In Ref. 1, 3 and 4." evidence="17" ref="1 3 4">
    <original>S</original>
    <variation>T</variation>
    <location>
        <position position="160"/>
    </location>
</feature>
<feature type="sequence conflict" description="In Ref. 1; CAA31217." evidence="17" ref="1">
    <original>N</original>
    <variation>D</variation>
    <location>
        <position position="485"/>
    </location>
</feature>
<feature type="strand" evidence="24">
    <location>
        <begin position="6"/>
        <end position="8"/>
    </location>
</feature>
<feature type="strand" evidence="24">
    <location>
        <begin position="10"/>
        <end position="14"/>
    </location>
</feature>
<feature type="helix" evidence="24">
    <location>
        <begin position="18"/>
        <end position="27"/>
    </location>
</feature>
<feature type="turn" evidence="24">
    <location>
        <begin position="28"/>
        <end position="30"/>
    </location>
</feature>
<feature type="strand" evidence="24">
    <location>
        <begin position="33"/>
        <end position="36"/>
    </location>
</feature>
<feature type="strand" evidence="25">
    <location>
        <begin position="38"/>
        <end position="40"/>
    </location>
</feature>
<feature type="helix" evidence="25">
    <location>
        <begin position="45"/>
        <end position="48"/>
    </location>
</feature>
<feature type="helix" evidence="24">
    <location>
        <begin position="60"/>
        <end position="73"/>
    </location>
</feature>
<feature type="turn" evidence="24">
    <location>
        <begin position="74"/>
        <end position="76"/>
    </location>
</feature>
<feature type="helix" evidence="24">
    <location>
        <begin position="80"/>
        <end position="99"/>
    </location>
</feature>
<feature type="strand" evidence="25">
    <location>
        <begin position="110"/>
        <end position="113"/>
    </location>
</feature>
<feature type="helix" evidence="24">
    <location>
        <begin position="145"/>
        <end position="150"/>
    </location>
</feature>
<feature type="strand" evidence="24">
    <location>
        <begin position="154"/>
        <end position="157"/>
    </location>
</feature>
<feature type="strand" evidence="24">
    <location>
        <begin position="159"/>
        <end position="167"/>
    </location>
</feature>
<feature type="helix" evidence="24">
    <location>
        <begin position="168"/>
        <end position="170"/>
    </location>
</feature>
<feature type="strand" evidence="24">
    <location>
        <begin position="178"/>
        <end position="186"/>
    </location>
</feature>
<feature type="turn" evidence="24">
    <location>
        <begin position="187"/>
        <end position="190"/>
    </location>
</feature>
<feature type="strand" evidence="24">
    <location>
        <begin position="191"/>
        <end position="196"/>
    </location>
</feature>
<feature type="strand" evidence="24">
    <location>
        <begin position="198"/>
        <end position="202"/>
    </location>
</feature>
<feature type="helix" evidence="24">
    <location>
        <begin position="208"/>
        <end position="210"/>
    </location>
</feature>
<feature type="strand" evidence="24">
    <location>
        <begin position="211"/>
        <end position="215"/>
    </location>
</feature>
<feature type="helix" evidence="24">
    <location>
        <begin position="217"/>
        <end position="219"/>
    </location>
</feature>
<feature type="helix" evidence="24">
    <location>
        <begin position="223"/>
        <end position="230"/>
    </location>
</feature>
<feature type="strand" evidence="24">
    <location>
        <begin position="241"/>
        <end position="248"/>
    </location>
</feature>
<feature type="helix" evidence="24">
    <location>
        <begin position="260"/>
        <end position="264"/>
    </location>
</feature>
<feature type="strand" evidence="24">
    <location>
        <begin position="268"/>
        <end position="270"/>
    </location>
</feature>
<feature type="helix" evidence="24">
    <location>
        <begin position="278"/>
        <end position="280"/>
    </location>
</feature>
<feature type="helix" evidence="24">
    <location>
        <begin position="285"/>
        <end position="287"/>
    </location>
</feature>
<feature type="helix" evidence="24">
    <location>
        <begin position="290"/>
        <end position="304"/>
    </location>
</feature>
<feature type="strand" evidence="24">
    <location>
        <begin position="309"/>
        <end position="312"/>
    </location>
</feature>
<feature type="helix" evidence="24">
    <location>
        <begin position="319"/>
        <end position="324"/>
    </location>
</feature>
<feature type="helix" evidence="24">
    <location>
        <begin position="326"/>
        <end position="333"/>
    </location>
</feature>
<feature type="turn" evidence="24">
    <location>
        <begin position="334"/>
        <end position="336"/>
    </location>
</feature>
<feature type="turn" evidence="24">
    <location>
        <begin position="339"/>
        <end position="341"/>
    </location>
</feature>
<feature type="strand" evidence="24">
    <location>
        <begin position="344"/>
        <end position="354"/>
    </location>
</feature>
<feature type="strand" evidence="24">
    <location>
        <begin position="356"/>
        <end position="358"/>
    </location>
</feature>
<feature type="strand" evidence="24">
    <location>
        <begin position="366"/>
        <end position="368"/>
    </location>
</feature>
<feature type="strand" evidence="24">
    <location>
        <begin position="370"/>
        <end position="372"/>
    </location>
</feature>
<feature type="helix" evidence="24">
    <location>
        <begin position="374"/>
        <end position="376"/>
    </location>
</feature>
<feature type="strand" evidence="24">
    <location>
        <begin position="380"/>
        <end position="382"/>
    </location>
</feature>
<feature type="helix" evidence="24">
    <location>
        <begin position="390"/>
        <end position="409"/>
    </location>
</feature>
<feature type="helix" evidence="25">
    <location>
        <begin position="410"/>
        <end position="412"/>
    </location>
</feature>
<feature type="helix" evidence="24">
    <location>
        <begin position="430"/>
        <end position="450"/>
    </location>
</feature>
<feature type="strand" evidence="24">
    <location>
        <begin position="451"/>
        <end position="455"/>
    </location>
</feature>
<feature type="helix" evidence="24">
    <location>
        <begin position="457"/>
        <end position="478"/>
    </location>
</feature>
<feature type="helix" evidence="24">
    <location>
        <begin position="485"/>
        <end position="506"/>
    </location>
</feature>
<evidence type="ECO:0000269" key="1">
    <source>
    </source>
</evidence>
<evidence type="ECO:0000269" key="2">
    <source>
    </source>
</evidence>
<evidence type="ECO:0000269" key="3">
    <source>
    </source>
</evidence>
<evidence type="ECO:0000269" key="4">
    <source>
    </source>
</evidence>
<evidence type="ECO:0000269" key="5">
    <source>
    </source>
</evidence>
<evidence type="ECO:0000269" key="6">
    <source>
    </source>
</evidence>
<evidence type="ECO:0000269" key="7">
    <source>
    </source>
</evidence>
<evidence type="ECO:0000269" key="8">
    <source>
    </source>
</evidence>
<evidence type="ECO:0000269" key="9">
    <source>
    </source>
</evidence>
<evidence type="ECO:0000269" key="10">
    <source>
    </source>
</evidence>
<evidence type="ECO:0000269" key="11">
    <source>
    </source>
</evidence>
<evidence type="ECO:0000269" key="12">
    <source>
    </source>
</evidence>
<evidence type="ECO:0000303" key="13">
    <source>
    </source>
</evidence>
<evidence type="ECO:0000303" key="14">
    <source>
    </source>
</evidence>
<evidence type="ECO:0000303" key="15">
    <source>
    </source>
</evidence>
<evidence type="ECO:0000303" key="16">
    <source>
    </source>
</evidence>
<evidence type="ECO:0000305" key="17"/>
<evidence type="ECO:0000305" key="18">
    <source>
    </source>
</evidence>
<evidence type="ECO:0000305" key="19">
    <source>
    </source>
</evidence>
<evidence type="ECO:0000305" key="20">
    <source>
    </source>
</evidence>
<evidence type="ECO:0007744" key="21">
    <source>
        <dbReference type="PDB" id="1CHU"/>
    </source>
</evidence>
<evidence type="ECO:0007744" key="22">
    <source>
        <dbReference type="PDB" id="1KNP"/>
    </source>
</evidence>
<evidence type="ECO:0007744" key="23">
    <source>
        <dbReference type="PDB" id="1KNR"/>
    </source>
</evidence>
<evidence type="ECO:0007829" key="24">
    <source>
        <dbReference type="PDB" id="1CHU"/>
    </source>
</evidence>
<evidence type="ECO:0007829" key="25">
    <source>
        <dbReference type="PDB" id="1KNR"/>
    </source>
</evidence>
<reference key="1">
    <citation type="journal article" date="1988" name="Eur. J. Biochem.">
        <title>Molecular biology of pyridine nucleotide biosynthesis in Escherichia coli. Cloning and characterization of quinolinate synthesis genes nadA and nadB.</title>
        <authorList>
            <person name="Flachmann R."/>
            <person name="Kunz N."/>
            <person name="Seifert J."/>
            <person name="Guetlich M."/>
            <person name="Wientjes F.-J."/>
            <person name="Laeufer A."/>
            <person name="Gassen H.G."/>
        </authorList>
    </citation>
    <scope>NUCLEOTIDE SEQUENCE [GENOMIC DNA]</scope>
    <scope>PROTEIN SEQUENCE OF 1-19</scope>
    <scope>FUNCTION</scope>
    <scope>CATALYTIC ACTIVITY</scope>
    <scope>PATHWAY</scope>
</reference>
<reference key="2">
    <citation type="submission" date="1989-04" db="EMBL/GenBank/DDBJ databases">
        <authorList>
            <person name="Kunz N."/>
        </authorList>
    </citation>
    <scope>SEQUENCE REVISION</scope>
</reference>
<reference key="3">
    <citation type="book" date="1993" name="The translational apparatus">
        <title>Non-ribosomal proteins affecting the assembly of ribosomes in Escherichia coli.</title>
        <editorList>
            <person name="Nierhaus K.H."/>
        </editorList>
        <authorList>
            <person name="Nashimoto H."/>
        </authorList>
    </citation>
    <scope>NUCLEOTIDE SEQUENCE [GENOMIC DNA]</scope>
    <source>
        <strain>K12</strain>
    </source>
</reference>
<reference key="4">
    <citation type="submission" date="1995-09" db="EMBL/GenBank/DDBJ databases">
        <authorList>
            <person name="Nashimoto H."/>
            <person name="Saito N."/>
        </authorList>
    </citation>
    <scope>NUCLEOTIDE SEQUENCE [GENOMIC DNA]</scope>
    <source>
        <strain>K12</strain>
    </source>
</reference>
<reference key="5">
    <citation type="journal article" date="1997" name="Science">
        <title>The complete genome sequence of Escherichia coli K-12.</title>
        <authorList>
            <person name="Blattner F.R."/>
            <person name="Plunkett G. III"/>
            <person name="Bloch C.A."/>
            <person name="Perna N.T."/>
            <person name="Burland V."/>
            <person name="Riley M."/>
            <person name="Collado-Vides J."/>
            <person name="Glasner J.D."/>
            <person name="Rode C.K."/>
            <person name="Mayhew G.F."/>
            <person name="Gregor J."/>
            <person name="Davis N.W."/>
            <person name="Kirkpatrick H.A."/>
            <person name="Goeden M.A."/>
            <person name="Rose D.J."/>
            <person name="Mau B."/>
            <person name="Shao Y."/>
        </authorList>
    </citation>
    <scope>NUCLEOTIDE SEQUENCE [LARGE SCALE GENOMIC DNA]</scope>
    <source>
        <strain>K12 / MG1655 / ATCC 47076</strain>
    </source>
</reference>
<reference key="6">
    <citation type="journal article" date="2006" name="Mol. Syst. Biol.">
        <title>Highly accurate genome sequences of Escherichia coli K-12 strains MG1655 and W3110.</title>
        <authorList>
            <person name="Hayashi K."/>
            <person name="Morooka N."/>
            <person name="Yamamoto Y."/>
            <person name="Fujita K."/>
            <person name="Isono K."/>
            <person name="Choi S."/>
            <person name="Ohtsubo E."/>
            <person name="Baba T."/>
            <person name="Wanner B.L."/>
            <person name="Mori H."/>
            <person name="Horiuchi T."/>
        </authorList>
    </citation>
    <scope>NUCLEOTIDE SEQUENCE [LARGE SCALE GENOMIC DNA]</scope>
    <source>
        <strain>K12 / W3110 / ATCC 27325 / DSM 5911</strain>
    </source>
</reference>
<reference key="7">
    <citation type="journal article" date="1990" name="Biol. Chem. Hoppe-Seyler">
        <title>Expression of the E. coli nadB gene and characterization of the gene product L-aspartate oxidase.</title>
        <authorList>
            <person name="Seifert J."/>
            <person name="Kunz N."/>
            <person name="Flachmann R."/>
            <person name="Laeufer A."/>
            <person name="Jany K.-D."/>
            <person name="Gassen H.G."/>
        </authorList>
    </citation>
    <scope>PARTIAL PROTEIN SEQUENCE</scope>
    <scope>FUNCTION</scope>
    <scope>CATALYTIC ACTIVITY</scope>
    <scope>COFACTOR</scope>
    <scope>ACTIVITY REGULATION</scope>
    <scope>BIOPHYSICOCHEMICAL PROPERTIES</scope>
    <scope>SUBUNIT</scope>
</reference>
<reference key="8">
    <citation type="journal article" date="1982" name="J. Biol. Chem.">
        <title>L-Aspartate oxidase, a newly discovered enzyme of Escherichia coli, is the B protein of quinolinate synthetase.</title>
        <authorList>
            <person name="Nasu S."/>
            <person name="Wicks F.D."/>
            <person name="Gholson R.K."/>
        </authorList>
    </citation>
    <scope>FUNCTION</scope>
    <scope>CATALYTIC ACTIVITY</scope>
    <scope>COFACTOR</scope>
    <scope>ACTIVITY REGULATION</scope>
    <scope>BIOPHYSICOCHEMICAL PROPERTIES</scope>
    <scope>PATHWAY</scope>
</reference>
<reference key="9">
    <citation type="journal article" date="1996" name="Eur. J. Biochem.">
        <title>L-aspartate oxidase from Escherichia coli. I. Characterization of coenzyme binding and product inhibition.</title>
        <authorList>
            <person name="Mortarino M."/>
            <person name="Negri A."/>
            <person name="Tedeschi G."/>
            <person name="Simonic T."/>
            <person name="Duga S."/>
            <person name="Gassen H.G."/>
            <person name="Ronchi S."/>
        </authorList>
    </citation>
    <scope>FUNCTION</scope>
    <scope>CATALYTIC ACTIVITY</scope>
    <scope>COFACTOR</scope>
    <scope>ACTIVITY REGULATION</scope>
    <scope>SUBUNIT</scope>
    <scope>MUTAGENESIS OF 43-GLU--SER-45; 43-GLU--TYR-48; GLU-43 AND SER-45</scope>
</reference>
<reference key="10">
    <citation type="journal article" date="1996" name="Eur. J. Biochem.">
        <title>L-aspartate oxidase from Escherichia coli. II. Interaction with C4 dicarboxylic acids and identification of a novel L-aspartate: fumarate oxidoreductase activity.</title>
        <authorList>
            <person name="Tedeschi G."/>
            <person name="Negri A."/>
            <person name="Mortarino M."/>
            <person name="Ceciliani F."/>
            <person name="Simonic T."/>
            <person name="Faotto L."/>
            <person name="Ronchi S."/>
        </authorList>
    </citation>
    <scope>FUNCTION</scope>
    <scope>CATALYTIC ACTIVITY</scope>
</reference>
<reference key="11">
    <citation type="journal article" date="2001" name="Biochemistry">
        <title>Probing the active site of L-aspartate oxidase by site-directed mutagenesis: role of basic residues in fumarate reduction.</title>
        <authorList>
            <person name="Tedeschi G."/>
            <person name="Ronchi S."/>
            <person name="Simonic T."/>
            <person name="Treu C."/>
            <person name="Mattevi A."/>
            <person name="Negri A."/>
        </authorList>
    </citation>
    <scope>FUNCTION</scope>
    <scope>CATALYTIC ACTIVITY</scope>
    <scope>COFACTOR</scope>
    <scope>BIOPHYSICOCHEMICAL PROPERTIES</scope>
    <scope>MUTAGENESIS OF HIS-244; ARG-290; HIS-351 AND ARG-386</scope>
    <scope>ACTIVE SITE</scope>
</reference>
<reference key="12">
    <citation type="journal article" date="2002" name="J. Biol. Chem.">
        <title>Mechanism of superoxide and hydrogen peroxide formation by fumarate reductase, succinate dehydrogenase, and aspartate oxidase.</title>
        <authorList>
            <person name="Messner K.R."/>
            <person name="Imlay J.A."/>
        </authorList>
    </citation>
    <scope>FUNCTION</scope>
    <scope>CATALYTIC ACTIVITY</scope>
</reference>
<reference key="13">
    <citation type="journal article" date="2010" name="Mol. Microbiol.">
        <title>Two sources of endogenous hydrogen peroxide in Escherichia coli.</title>
        <authorList>
            <person name="Korshunov S."/>
            <person name="Imlay J.A."/>
        </authorList>
    </citation>
    <scope>FUNCTION</scope>
    <scope>CATALYTIC ACTIVITY</scope>
    <scope>DISRUPTION PHENOTYPE</scope>
</reference>
<reference key="14">
    <citation type="journal article" date="2010" name="Biochimie">
        <title>On the catalytic role of the active site residue E121 of E. coli L-aspartate oxidase.</title>
        <authorList>
            <person name="Tedeschi G."/>
            <person name="Nonnis S."/>
            <person name="Strumbo B."/>
            <person name="Cruciani G."/>
            <person name="Carosati E."/>
            <person name="Negri A."/>
        </authorList>
    </citation>
    <scope>BIOPHYSICOCHEMICAL PROPERTIES</scope>
    <scope>MUTAGENESIS OF GLU-121</scope>
</reference>
<reference key="15">
    <citation type="journal article" date="2017" name="Biochemistry">
        <title>Mechanistic characterization of Escherichia coli L-aspartate oxidase from kinetic isotope effects.</title>
        <authorList>
            <person name="Chow C."/>
            <person name="Hegde S."/>
            <person name="Blanchard J.S."/>
        </authorList>
    </citation>
    <scope>REACTION MECHANISM</scope>
</reference>
<reference evidence="21" key="16">
    <citation type="journal article" date="1999" name="Structure">
        <title>Structure of L-aspartate oxidase: implications for the succinate dehydrogenase/fumarate reductase oxidoreductase family.</title>
        <authorList>
            <person name="Mattevi A."/>
            <person name="Tedeschi G."/>
            <person name="Bacchella L."/>
            <person name="Coda A."/>
            <person name="Negri A."/>
            <person name="Ronchi S."/>
        </authorList>
    </citation>
    <scope>X-RAY CRYSTALLOGRAPHY (2.2 ANGSTROMS)</scope>
    <scope>SUBUNIT</scope>
    <scope>DOMAIN</scope>
</reference>
<reference evidence="22 23" key="17">
    <citation type="journal article" date="2002" name="Biochemistry">
        <title>Structure of FAD-bound L-aspartate oxidase: insight into substrate specificity and catalysis.</title>
        <authorList>
            <person name="Bossi R.T."/>
            <person name="Negri A."/>
            <person name="Tedeschi G."/>
            <person name="Mattevi A."/>
        </authorList>
    </citation>
    <scope>X-RAY CRYSTALLOGRAPHY (2.50 ANGSTROMS) OF MUTANT ILE-386 IN COMPLEX WITH FAD AND SUCCINATE</scope>
    <scope>COFACTOR</scope>
    <scope>DOMAIN</scope>
    <scope>ACTIVE SITE</scope>
</reference>
<gene>
    <name evidence="14" type="primary">nadB</name>
    <name type="synonym">nicB</name>
    <name type="ordered locus">b2574</name>
    <name type="ordered locus">JW2558</name>
</gene>
<comment type="function">
    <text evidence="2 4 5 7 8 10 11 12">Catalyzes the oxidation of L-aspartate to iminoaspartate, the first step in the de novo biosynthesis of NAD(+) (PubMed:11294641, PubMed:2187483, PubMed:2841129, PubMed:7033218, PubMed:8706749, PubMed:8706750). Can use either oxygen or fumarate as electron acceptors, which allows the enzyme to be functional under aerobic and anaerobic conditions (PubMed:11294641, PubMed:12200425, PubMed:8706750). In vivo, fumarate is used under anaerobic conditions, and oxygen is the predominant electron acceptor under aerobic conditions due to the lower fumarate levels (PubMed:20149100). In vitro, fumarate is a more efficient electron acceptor and is kinetically superior to oxygen (PubMed:12200425, PubMed:20149100).</text>
</comment>
<comment type="catalytic activity">
    <reaction evidence="2 4 5 7 8 10 11 12">
        <text>L-aspartate + O2 = iminosuccinate + H2O2</text>
        <dbReference type="Rhea" id="RHEA:25876"/>
        <dbReference type="ChEBI" id="CHEBI:15379"/>
        <dbReference type="ChEBI" id="CHEBI:16240"/>
        <dbReference type="ChEBI" id="CHEBI:29991"/>
        <dbReference type="ChEBI" id="CHEBI:77875"/>
        <dbReference type="EC" id="1.4.3.16"/>
    </reaction>
    <physiologicalReaction direction="left-to-right" evidence="8 10 12">
        <dbReference type="Rhea" id="RHEA:25877"/>
    </physiologicalReaction>
</comment>
<comment type="catalytic activity">
    <reaction evidence="2 4 5 12">
        <text>fumarate + L-aspartate = iminosuccinate + succinate</text>
        <dbReference type="Rhea" id="RHEA:30043"/>
        <dbReference type="ChEBI" id="CHEBI:29806"/>
        <dbReference type="ChEBI" id="CHEBI:29991"/>
        <dbReference type="ChEBI" id="CHEBI:30031"/>
        <dbReference type="ChEBI" id="CHEBI:77875"/>
    </reaction>
    <physiologicalReaction direction="left-to-right" evidence="12">
        <dbReference type="Rhea" id="RHEA:30044"/>
    </physiologicalReaction>
</comment>
<comment type="cofactor">
    <cofactor evidence="2 3 7 10 11">
        <name>FAD</name>
        <dbReference type="ChEBI" id="CHEBI:57692"/>
    </cofactor>
    <text evidence="3">Binds 1 FAD per subunit.</text>
</comment>
<comment type="activity regulation">
    <text evidence="7 10 11">Inhibited by the product iminoaspartate (PubMed:8706749). Competitively inhibited by mesotartrate (PubMed:2187483). NAD acts as a competitive inhibitor to FAD (PubMed:2187483, PubMed:7033218). Inhibited by iodoacetic acid, diethylpyrocarbonate and tetranitromethane (PubMed:2187483).</text>
</comment>
<comment type="biophysicochemical properties">
    <kinetics>
        <KM evidence="10">0.63 mM for L-aspartate (at substrate concentrations between 0.25 and 1.25 mM)</KM>
        <KM evidence="10">3.33 mM for L-aspartate (at substrate concentrations between 2.0 and 10.00 mM)</KM>
        <KM evidence="7">0.5 mM for L-aspartate (at substrate concentrations between 0.2 and l mM)</KM>
        <KM evidence="7">4.1 mM for L-aspartate (at substrate concentrations between 1 and 20 mM)</KM>
        <KM evidence="6">4.9 mM for L-aspartate</KM>
        <KM evidence="6">17 mM for N-acetyl-L-aspartate</KM>
        <KM evidence="6">3.7 mM for N-formyl-L-aspartate</KM>
        <KM evidence="6">4.7 mM for 3-OH-erythro-L-aspartate</KM>
        <KM evidence="10">2.5 mM for FAD</KM>
        <text evidence="2 6">kcat is 29.4 min(-1) for L-aspartate oxidase activity with oxygen as electron acceptor. kcat is 16.0 min(-1) for reduced benzyl viologen:fumarate oxidoreductase activity (PubMed:11294641). kcat is 40.0 min(-1) with L-aspartate as substrate. kcat is 0.21 min(-1) with N-acetyl-L-aspartate as substrate. kcat is 0.46 min(-1) with N-formyl-L-aspartate as substrate. kcat is 10.4 min(-1) with 3-OH-erythro-L-aspartate as substrate (PubMed:20600565).</text>
    </kinetics>
    <phDependence>
        <text evidence="10">Optimum pH is 8.0.</text>
    </phDependence>
    <temperatureDependence>
        <text evidence="7">Optimum temperature is 40 degrees Celsius.</text>
    </temperatureDependence>
</comment>
<comment type="pathway">
    <text evidence="10 20">Cofactor biosynthesis; NAD(+) biosynthesis; iminoaspartate from L-aspartate (oxidase route): step 1/1.</text>
</comment>
<comment type="subunit">
    <text evidence="1 7 11">Monomer (PubMed:2187483, PubMed:8706749). Homodimer (PubMed:10425677). Both the monomeric and dimeric forms of the enzyme are catalytically active (PubMed:10425677).</text>
</comment>
<comment type="subcellular location">
    <subcellularLocation>
        <location evidence="17">Cytoplasm</location>
    </subcellularLocation>
</comment>
<comment type="domain">
    <text evidence="1 3">Folds into three domains: the FAD-binding domain, the capping domain and the C-terminal helical domain.</text>
</comment>
<comment type="disruption phenotype">
    <text evidence="5">Mutants lacking this gene generate 25% less H(2)O(2) than the parent strain.</text>
</comment>
<comment type="miscellaneous">
    <text evidence="9">The chemistry is similar to that of typical amino acid oxidases in which the transfer of the hydride from C2 of L-aspartate to FAD is rate-limiting and occurs in a concerted manner with respect to deprotonation of the alpha-amine. NadB may have structurally evolved from succinate dehydrogenase/fumarate reductase-type enzymes to gain the new functionality of oxidizing amino acids while retaining the ability to reduce fumarate.</text>
</comment>
<comment type="similarity">
    <text evidence="17">Belongs to the FAD-dependent oxidoreductase 2 family. NadB subfamily.</text>
</comment>
<keyword id="KW-0002">3D-structure</keyword>
<keyword id="KW-0963">Cytoplasm</keyword>
<keyword id="KW-0903">Direct protein sequencing</keyword>
<keyword id="KW-0274">FAD</keyword>
<keyword id="KW-0285">Flavoprotein</keyword>
<keyword id="KW-0547">Nucleotide-binding</keyword>
<keyword id="KW-0560">Oxidoreductase</keyword>
<keyword id="KW-0662">Pyridine nucleotide biosynthesis</keyword>
<keyword id="KW-1185">Reference proteome</keyword>
<organism>
    <name type="scientific">Escherichia coli (strain K12)</name>
    <dbReference type="NCBI Taxonomy" id="83333"/>
    <lineage>
        <taxon>Bacteria</taxon>
        <taxon>Pseudomonadati</taxon>
        <taxon>Pseudomonadota</taxon>
        <taxon>Gammaproteobacteria</taxon>
        <taxon>Enterobacterales</taxon>
        <taxon>Enterobacteriaceae</taxon>
        <taxon>Escherichia</taxon>
    </lineage>
</organism>
<dbReference type="EC" id="1.4.3.16" evidence="2 4 5 7 8 10 11 12"/>
<dbReference type="EC" id="1.5.99.-" evidence="2 4 5 12"/>
<dbReference type="EMBL" id="X12714">
    <property type="protein sequence ID" value="CAA31217.1"/>
    <property type="molecule type" value="Genomic_DNA"/>
</dbReference>
<dbReference type="EMBL" id="D13169">
    <property type="protein sequence ID" value="BAA02446.1"/>
    <property type="molecule type" value="Genomic_DNA"/>
</dbReference>
<dbReference type="EMBL" id="D64044">
    <property type="protein sequence ID" value="BAA10921.1"/>
    <property type="molecule type" value="Genomic_DNA"/>
</dbReference>
<dbReference type="EMBL" id="U00096">
    <property type="protein sequence ID" value="AAC75627.1"/>
    <property type="molecule type" value="Genomic_DNA"/>
</dbReference>
<dbReference type="EMBL" id="AP009048">
    <property type="protein sequence ID" value="BAE76750.1"/>
    <property type="molecule type" value="Genomic_DNA"/>
</dbReference>
<dbReference type="PIR" id="E65035">
    <property type="entry name" value="OXECLD"/>
</dbReference>
<dbReference type="RefSeq" id="NP_417069.1">
    <property type="nucleotide sequence ID" value="NC_000913.3"/>
</dbReference>
<dbReference type="RefSeq" id="WP_001094491.1">
    <property type="nucleotide sequence ID" value="NZ_LN832404.1"/>
</dbReference>
<dbReference type="PDB" id="1CHU">
    <property type="method" value="X-ray"/>
    <property type="resolution" value="2.20 A"/>
    <property type="chains" value="A=1-540"/>
</dbReference>
<dbReference type="PDB" id="1KNP">
    <property type="method" value="X-ray"/>
    <property type="resolution" value="2.60 A"/>
    <property type="chains" value="A=1-540"/>
</dbReference>
<dbReference type="PDB" id="1KNR">
    <property type="method" value="X-ray"/>
    <property type="resolution" value="2.50 A"/>
    <property type="chains" value="A=1-540"/>
</dbReference>
<dbReference type="PDBsum" id="1CHU"/>
<dbReference type="PDBsum" id="1KNP"/>
<dbReference type="PDBsum" id="1KNR"/>
<dbReference type="SMR" id="P10902"/>
<dbReference type="BioGRID" id="4263282">
    <property type="interactions" value="19"/>
</dbReference>
<dbReference type="BioGRID" id="851387">
    <property type="interactions" value="1"/>
</dbReference>
<dbReference type="DIP" id="DIP-556N"/>
<dbReference type="FunCoup" id="P10902">
    <property type="interactions" value="582"/>
</dbReference>
<dbReference type="IntAct" id="P10902">
    <property type="interactions" value="7"/>
</dbReference>
<dbReference type="STRING" id="511145.b2574"/>
<dbReference type="DrugBank" id="DB03147">
    <property type="generic name" value="Flavin adenine dinucleotide"/>
</dbReference>
<dbReference type="PaxDb" id="511145-b2574"/>
<dbReference type="EnsemblBacteria" id="AAC75627">
    <property type="protein sequence ID" value="AAC75627"/>
    <property type="gene ID" value="b2574"/>
</dbReference>
<dbReference type="GeneID" id="947049"/>
<dbReference type="KEGG" id="ecj:JW2558"/>
<dbReference type="KEGG" id="eco:b2574"/>
<dbReference type="KEGG" id="ecoc:C3026_14260"/>
<dbReference type="PATRIC" id="fig|1411691.4.peg.4160"/>
<dbReference type="EchoBASE" id="EB0625"/>
<dbReference type="eggNOG" id="COG0029">
    <property type="taxonomic scope" value="Bacteria"/>
</dbReference>
<dbReference type="HOGENOM" id="CLU_014312_3_0_6"/>
<dbReference type="InParanoid" id="P10902"/>
<dbReference type="OMA" id="HCVQWLI"/>
<dbReference type="OrthoDB" id="9806724at2"/>
<dbReference type="PhylomeDB" id="P10902"/>
<dbReference type="BioCyc" id="EcoCyc:L-ASPARTATE-OXID-MONOMER"/>
<dbReference type="BioCyc" id="MetaCyc:L-ASPARTATE-OXID-MONOMER"/>
<dbReference type="BRENDA" id="1.4.3.16">
    <property type="organism ID" value="2026"/>
</dbReference>
<dbReference type="UniPathway" id="UPA00253">
    <property type="reaction ID" value="UER00326"/>
</dbReference>
<dbReference type="EvolutionaryTrace" id="P10902"/>
<dbReference type="PRO" id="PR:P10902"/>
<dbReference type="Proteomes" id="UP000000625">
    <property type="component" value="Chromosome"/>
</dbReference>
<dbReference type="GO" id="GO:0005829">
    <property type="term" value="C:cytosol"/>
    <property type="evidence" value="ECO:0000314"/>
    <property type="project" value="EcoCyc"/>
</dbReference>
<dbReference type="GO" id="GO:0050660">
    <property type="term" value="F:flavin adenine dinucleotide binding"/>
    <property type="evidence" value="ECO:0000314"/>
    <property type="project" value="EcoCyc"/>
</dbReference>
<dbReference type="GO" id="GO:0008734">
    <property type="term" value="F:L-aspartate oxidase activity"/>
    <property type="evidence" value="ECO:0000314"/>
    <property type="project" value="EcoCyc"/>
</dbReference>
<dbReference type="GO" id="GO:0034628">
    <property type="term" value="P:'de novo' NAD biosynthetic process from L-aspartate"/>
    <property type="evidence" value="ECO:0000315"/>
    <property type="project" value="EcoCyc"/>
</dbReference>
<dbReference type="FunFam" id="1.20.58.100:FF:000002">
    <property type="entry name" value="L-aspartate oxidase"/>
    <property type="match status" value="1"/>
</dbReference>
<dbReference type="FunFam" id="3.50.50.60:FF:000060">
    <property type="entry name" value="L-aspartate oxidase"/>
    <property type="match status" value="1"/>
</dbReference>
<dbReference type="FunFam" id="3.90.700.10:FF:000002">
    <property type="entry name" value="L-aspartate oxidase"/>
    <property type="match status" value="1"/>
</dbReference>
<dbReference type="Gene3D" id="3.50.50.60">
    <property type="entry name" value="FAD/NAD(P)-binding domain"/>
    <property type="match status" value="1"/>
</dbReference>
<dbReference type="Gene3D" id="1.20.58.100">
    <property type="entry name" value="Fumarate reductase/succinate dehydrogenase flavoprotein-like, C-terminal domain"/>
    <property type="match status" value="1"/>
</dbReference>
<dbReference type="Gene3D" id="3.90.700.10">
    <property type="entry name" value="Succinate dehydrogenase/fumarate reductase flavoprotein, catalytic domain"/>
    <property type="match status" value="1"/>
</dbReference>
<dbReference type="InterPro" id="IPR003953">
    <property type="entry name" value="FAD-dep_OxRdtase_2_FAD-bd"/>
</dbReference>
<dbReference type="InterPro" id="IPR036188">
    <property type="entry name" value="FAD/NAD-bd_sf"/>
</dbReference>
<dbReference type="InterPro" id="IPR037099">
    <property type="entry name" value="Fum_R/Succ_DH_flav-like_C_sf"/>
</dbReference>
<dbReference type="InterPro" id="IPR015939">
    <property type="entry name" value="Fum_Rdtase/Succ_DH_flav-like_C"/>
</dbReference>
<dbReference type="InterPro" id="IPR005288">
    <property type="entry name" value="NadB"/>
</dbReference>
<dbReference type="InterPro" id="IPR027477">
    <property type="entry name" value="Succ_DH/fumarate_Rdtase_cat_sf"/>
</dbReference>
<dbReference type="NCBIfam" id="TIGR00551">
    <property type="entry name" value="nadB"/>
    <property type="match status" value="1"/>
</dbReference>
<dbReference type="NCBIfam" id="NF006567">
    <property type="entry name" value="PRK09077.1"/>
    <property type="match status" value="1"/>
</dbReference>
<dbReference type="PANTHER" id="PTHR42716">
    <property type="entry name" value="L-ASPARTATE OXIDASE"/>
    <property type="match status" value="1"/>
</dbReference>
<dbReference type="PANTHER" id="PTHR42716:SF2">
    <property type="entry name" value="L-ASPARTATE OXIDASE, CHLOROPLASTIC"/>
    <property type="match status" value="1"/>
</dbReference>
<dbReference type="Pfam" id="PF00890">
    <property type="entry name" value="FAD_binding_2"/>
    <property type="match status" value="1"/>
</dbReference>
<dbReference type="Pfam" id="PF02910">
    <property type="entry name" value="Succ_DH_flav_C"/>
    <property type="match status" value="1"/>
</dbReference>
<dbReference type="PIRSF" id="PIRSF000171">
    <property type="entry name" value="SDHA_APRA_LASPO"/>
    <property type="match status" value="1"/>
</dbReference>
<dbReference type="PRINTS" id="PR00368">
    <property type="entry name" value="FADPNR"/>
</dbReference>
<dbReference type="PRINTS" id="PR00411">
    <property type="entry name" value="PNDRDTASEI"/>
</dbReference>
<dbReference type="SUPFAM" id="SSF51905">
    <property type="entry name" value="FAD/NAD(P)-binding domain"/>
    <property type="match status" value="1"/>
</dbReference>
<dbReference type="SUPFAM" id="SSF46977">
    <property type="entry name" value="Succinate dehydrogenase/fumarate reductase flavoprotein C-terminal domain"/>
    <property type="match status" value="1"/>
</dbReference>
<dbReference type="SUPFAM" id="SSF56425">
    <property type="entry name" value="Succinate dehydrogenase/fumarate reductase flavoprotein, catalytic domain"/>
    <property type="match status" value="1"/>
</dbReference>
<name>NADB_ECOLI</name>
<proteinExistence type="evidence at protein level"/>